<feature type="chain" id="PRO_0000057100" description="Oxidized purine nucleoside triphosphate hydrolase">
    <location>
        <begin position="1"/>
        <end position="156"/>
    </location>
</feature>
<feature type="domain" description="Nudix hydrolase" evidence="4">
    <location>
        <begin position="3"/>
        <end position="132"/>
    </location>
</feature>
<feature type="short sequence motif" description="Nudix box" evidence="4">
    <location>
        <begin position="37"/>
        <end position="58"/>
    </location>
</feature>
<feature type="binding site" evidence="1">
    <location>
        <position position="8"/>
    </location>
    <ligand>
        <name>2-oxo-dATP</name>
        <dbReference type="ChEBI" id="CHEBI:77897"/>
    </ligand>
</feature>
<feature type="binding site" evidence="6 14">
    <location>
        <position position="8"/>
    </location>
    <ligand>
        <name>8-oxo-dGTP</name>
        <dbReference type="ChEBI" id="CHEBI:77896"/>
    </ligand>
</feature>
<feature type="binding site" evidence="6 14">
    <location>
        <position position="23"/>
    </location>
    <ligand>
        <name>8-oxo-dGTP</name>
        <dbReference type="ChEBI" id="CHEBI:77896"/>
    </ligand>
</feature>
<feature type="binding site" evidence="1">
    <location>
        <position position="33"/>
    </location>
    <ligand>
        <name>2-oxo-dATP</name>
        <dbReference type="ChEBI" id="CHEBI:77897"/>
    </ligand>
</feature>
<feature type="binding site" evidence="6 14">
    <location>
        <position position="33"/>
    </location>
    <ligand>
        <name>8-oxo-dGTP</name>
        <dbReference type="ChEBI" id="CHEBI:77896"/>
    </ligand>
</feature>
<feature type="binding site" evidence="1">
    <location>
        <begin position="35"/>
        <end position="38"/>
    </location>
    <ligand>
        <name>2-oxo-dATP</name>
        <dbReference type="ChEBI" id="CHEBI:77897"/>
    </ligand>
</feature>
<feature type="binding site" evidence="6 14">
    <location>
        <begin position="35"/>
        <end position="38"/>
    </location>
    <ligand>
        <name>8-oxo-dGTP</name>
        <dbReference type="ChEBI" id="CHEBI:77896"/>
    </ligand>
</feature>
<feature type="binding site" evidence="3">
    <location>
        <position position="36"/>
    </location>
    <ligand>
        <name>Mg(2+)</name>
        <dbReference type="ChEBI" id="CHEBI:18420"/>
        <label>1</label>
    </ligand>
</feature>
<feature type="binding site" evidence="6 14">
    <location>
        <position position="52"/>
    </location>
    <ligand>
        <name>8-oxo-dGTP</name>
        <dbReference type="ChEBI" id="CHEBI:77896"/>
    </ligand>
</feature>
<feature type="binding site" evidence="3">
    <location>
        <position position="52"/>
    </location>
    <ligand>
        <name>Mg(2+)</name>
        <dbReference type="ChEBI" id="CHEBI:18420"/>
        <label>2</label>
    </ligand>
</feature>
<feature type="binding site" evidence="3">
    <location>
        <position position="55"/>
    </location>
    <ligand>
        <name>Mg(2+)</name>
        <dbReference type="ChEBI" id="CHEBI:18420"/>
        <label>2</label>
    </ligand>
</feature>
<feature type="binding site" evidence="6 14">
    <location>
        <position position="56"/>
    </location>
    <ligand>
        <name>8-oxo-dGTP</name>
        <dbReference type="ChEBI" id="CHEBI:77896"/>
    </ligand>
</feature>
<feature type="binding site" evidence="3">
    <location>
        <position position="56"/>
    </location>
    <ligand>
        <name>Mg(2+)</name>
        <dbReference type="ChEBI" id="CHEBI:18420"/>
        <label>1</label>
    </ligand>
</feature>
<feature type="binding site" evidence="6 14">
    <location>
        <position position="100"/>
    </location>
    <ligand>
        <name>8-oxo-dGTP</name>
        <dbReference type="ChEBI" id="CHEBI:77896"/>
    </ligand>
</feature>
<feature type="binding site" evidence="3">
    <location>
        <position position="100"/>
    </location>
    <ligand>
        <name>Mg(2+)</name>
        <dbReference type="ChEBI" id="CHEBI:18420"/>
        <label>1</label>
    </ligand>
</feature>
<feature type="binding site" evidence="1">
    <location>
        <begin position="117"/>
        <end position="120"/>
    </location>
    <ligand>
        <name>2-oxo-dATP</name>
        <dbReference type="ChEBI" id="CHEBI:77897"/>
    </ligand>
</feature>
<feature type="binding site" evidence="6 14">
    <location>
        <begin position="117"/>
        <end position="120"/>
    </location>
    <ligand>
        <name>8-oxo-dGTP</name>
        <dbReference type="ChEBI" id="CHEBI:77896"/>
    </ligand>
</feature>
<feature type="sequence conflict" description="In Ref. 5; AAH21940." evidence="10" ref="5">
    <original>L</original>
    <variation>M</variation>
    <location>
        <position position="116"/>
    </location>
</feature>
<feature type="strand" evidence="18">
    <location>
        <begin position="4"/>
        <end position="13"/>
    </location>
</feature>
<feature type="strand" evidence="18">
    <location>
        <begin position="15"/>
        <end position="23"/>
    </location>
</feature>
<feature type="turn" evidence="18">
    <location>
        <begin position="27"/>
        <end position="30"/>
    </location>
</feature>
<feature type="strand" evidence="18">
    <location>
        <begin position="31"/>
        <end position="33"/>
    </location>
</feature>
<feature type="strand" evidence="18">
    <location>
        <begin position="35"/>
        <end position="38"/>
    </location>
</feature>
<feature type="helix" evidence="18">
    <location>
        <begin position="45"/>
        <end position="57"/>
    </location>
</feature>
<feature type="strand" evidence="18">
    <location>
        <begin position="65"/>
        <end position="74"/>
    </location>
</feature>
<feature type="strand" evidence="18">
    <location>
        <begin position="80"/>
        <end position="88"/>
    </location>
</feature>
<feature type="strand" evidence="18">
    <location>
        <begin position="99"/>
        <end position="107"/>
    </location>
</feature>
<feature type="helix" evidence="17">
    <location>
        <begin position="108"/>
        <end position="110"/>
    </location>
</feature>
<feature type="helix" evidence="18">
    <location>
        <begin position="113"/>
        <end position="115"/>
    </location>
</feature>
<feature type="helix" evidence="18">
    <location>
        <begin position="120"/>
        <end position="128"/>
    </location>
</feature>
<feature type="strand" evidence="18">
    <location>
        <begin position="132"/>
        <end position="141"/>
    </location>
</feature>
<feature type="strand" evidence="18">
    <location>
        <begin position="144"/>
        <end position="153"/>
    </location>
</feature>
<organism>
    <name type="scientific">Mus musculus</name>
    <name type="common">Mouse</name>
    <dbReference type="NCBI Taxonomy" id="10090"/>
    <lineage>
        <taxon>Eukaryota</taxon>
        <taxon>Metazoa</taxon>
        <taxon>Chordata</taxon>
        <taxon>Craniata</taxon>
        <taxon>Vertebrata</taxon>
        <taxon>Euteleostomi</taxon>
        <taxon>Mammalia</taxon>
        <taxon>Eutheria</taxon>
        <taxon>Euarchontoglires</taxon>
        <taxon>Glires</taxon>
        <taxon>Rodentia</taxon>
        <taxon>Myomorpha</taxon>
        <taxon>Muroidea</taxon>
        <taxon>Muridae</taxon>
        <taxon>Murinae</taxon>
        <taxon>Mus</taxon>
        <taxon>Mus</taxon>
    </lineage>
</organism>
<evidence type="ECO:0000250" key="1">
    <source>
        <dbReference type="UniProtKB" id="P36639"/>
    </source>
</evidence>
<evidence type="ECO:0000250" key="2">
    <source>
        <dbReference type="UniProtKB" id="P53369"/>
    </source>
</evidence>
<evidence type="ECO:0000250" key="3">
    <source>
        <dbReference type="UniProtKB" id="Q7ZWC3"/>
    </source>
</evidence>
<evidence type="ECO:0000255" key="4">
    <source>
        <dbReference type="PROSITE-ProRule" id="PRU00794"/>
    </source>
</evidence>
<evidence type="ECO:0000269" key="5">
    <source>
    </source>
</evidence>
<evidence type="ECO:0000269" key="6">
    <source>
    </source>
</evidence>
<evidence type="ECO:0000269" key="7">
    <source>
    </source>
</evidence>
<evidence type="ECO:0000269" key="8">
    <source>
    </source>
</evidence>
<evidence type="ECO:0000269" key="9">
    <source>
    </source>
</evidence>
<evidence type="ECO:0000305" key="10"/>
<evidence type="ECO:0000305" key="11">
    <source>
    </source>
</evidence>
<evidence type="ECO:0000305" key="12">
    <source>
    </source>
</evidence>
<evidence type="ECO:0000305" key="13">
    <source>
    </source>
</evidence>
<evidence type="ECO:0007744" key="14">
    <source>
        <dbReference type="PDB" id="5MZE"/>
    </source>
</evidence>
<evidence type="ECO:0007744" key="15">
    <source>
        <dbReference type="PDB" id="5MZG"/>
    </source>
</evidence>
<evidence type="ECO:0007744" key="16">
    <source>
        <dbReference type="PDB" id="6EHH"/>
    </source>
</evidence>
<evidence type="ECO:0007829" key="17">
    <source>
        <dbReference type="PDB" id="5MZE"/>
    </source>
</evidence>
<evidence type="ECO:0007829" key="18">
    <source>
        <dbReference type="PDB" id="5MZG"/>
    </source>
</evidence>
<name>8ODP_MOUSE</name>
<sequence length="156" mass="17908">MSTSRLYTLVLVLQPQRVLLGMKKRGFGAGRWNGFGGKVQEGETIEDGAKRELLEESGLSVDTLHKVGHISFEFVGSPELMDVHIFSADHVHGTPTESEEMRPQWFQLDQIPFADLWPDDSYWFPLLLQKKKFCGHFKFQDQDTILSYSLREVDSF</sequence>
<protein>
    <recommendedName>
        <fullName evidence="10">Oxidized purine nucleoside triphosphate hydrolase</fullName>
        <ecNumber evidence="1">3.6.1.56</ecNumber>
    </recommendedName>
    <alternativeName>
        <fullName>2-hydroxy-dATP diphosphatase</fullName>
    </alternativeName>
    <alternativeName>
        <fullName>7,8-dihydro-8-oxoguanine triphosphatase</fullName>
    </alternativeName>
    <alternativeName>
        <fullName>8-oxo-dGTPase</fullName>
    </alternativeName>
    <alternativeName>
        <fullName evidence="1">Methylated purine nucleoside triphosphate hydrolase</fullName>
        <ecNumber evidence="1">3.6.1.-</ecNumber>
    </alternativeName>
    <alternativeName>
        <fullName>Nucleoside diphosphate-linked moiety X motif 1</fullName>
        <shortName>Nudix motif 1</shortName>
    </alternativeName>
</protein>
<dbReference type="EC" id="3.6.1.56" evidence="1"/>
<dbReference type="EC" id="3.6.1.-" evidence="1"/>
<dbReference type="EMBL" id="D49956">
    <property type="protein sequence ID" value="BAA08711.1"/>
    <property type="molecule type" value="mRNA"/>
</dbReference>
<dbReference type="EMBL" id="D88356">
    <property type="protein sequence ID" value="BAA19866.1"/>
    <property type="molecule type" value="Genomic_DNA"/>
</dbReference>
<dbReference type="EMBL" id="AK011695">
    <property type="protein sequence ID" value="BAB27785.1"/>
    <property type="molecule type" value="mRNA"/>
</dbReference>
<dbReference type="EMBL" id="AK088309">
    <property type="protein sequence ID" value="BAC40274.1"/>
    <property type="molecule type" value="mRNA"/>
</dbReference>
<dbReference type="EMBL" id="AK168312">
    <property type="protein sequence ID" value="BAE40252.1"/>
    <property type="molecule type" value="mRNA"/>
</dbReference>
<dbReference type="EMBL" id="CH466529">
    <property type="protein sequence ID" value="EDL19122.1"/>
    <property type="molecule type" value="Genomic_DNA"/>
</dbReference>
<dbReference type="EMBL" id="CH466529">
    <property type="protein sequence ID" value="EDL19123.1"/>
    <property type="molecule type" value="Genomic_DNA"/>
</dbReference>
<dbReference type="EMBL" id="BC021940">
    <property type="protein sequence ID" value="AAH21940.1"/>
    <property type="molecule type" value="mRNA"/>
</dbReference>
<dbReference type="EMBL" id="BC098239">
    <property type="protein sequence ID" value="AAH98239.1"/>
    <property type="molecule type" value="mRNA"/>
</dbReference>
<dbReference type="CCDS" id="CCDS19818.1"/>
<dbReference type="PIR" id="I49446">
    <property type="entry name" value="I49446"/>
</dbReference>
<dbReference type="RefSeq" id="NP_001343512.1">
    <property type="nucleotide sequence ID" value="NM_001356583.2"/>
</dbReference>
<dbReference type="RefSeq" id="NP_001343513.1">
    <property type="nucleotide sequence ID" value="NM_001356584.2"/>
</dbReference>
<dbReference type="RefSeq" id="NP_001343514.1">
    <property type="nucleotide sequence ID" value="NM_001356585.2"/>
</dbReference>
<dbReference type="RefSeq" id="NP_001407087.1">
    <property type="nucleotide sequence ID" value="NM_001420158.1"/>
</dbReference>
<dbReference type="RefSeq" id="NP_032663.1">
    <property type="nucleotide sequence ID" value="NM_008637.3"/>
</dbReference>
<dbReference type="RefSeq" id="XP_006504718.1">
    <property type="nucleotide sequence ID" value="XM_006504655.2"/>
</dbReference>
<dbReference type="RefSeq" id="XP_006504719.1">
    <property type="nucleotide sequence ID" value="XM_006504656.2"/>
</dbReference>
<dbReference type="RefSeq" id="XP_006504720.1">
    <property type="nucleotide sequence ID" value="XM_006504657.2"/>
</dbReference>
<dbReference type="PDB" id="5MZE">
    <property type="method" value="X-ray"/>
    <property type="resolution" value="2.10 A"/>
    <property type="chains" value="A/B/C/D=1-156"/>
</dbReference>
<dbReference type="PDB" id="5MZG">
    <property type="method" value="X-ray"/>
    <property type="resolution" value="1.85 A"/>
    <property type="chains" value="A/B=1-156"/>
</dbReference>
<dbReference type="PDB" id="6EHH">
    <property type="method" value="X-ray"/>
    <property type="resolution" value="2.40 A"/>
    <property type="chains" value="A/B/C/D=1-156"/>
</dbReference>
<dbReference type="PDBsum" id="5MZE"/>
<dbReference type="PDBsum" id="5MZG"/>
<dbReference type="PDBsum" id="6EHH"/>
<dbReference type="SMR" id="P53368"/>
<dbReference type="FunCoup" id="P53368">
    <property type="interactions" value="645"/>
</dbReference>
<dbReference type="STRING" id="10090.ENSMUSP00000059983"/>
<dbReference type="iPTMnet" id="P53368"/>
<dbReference type="PhosphoSitePlus" id="P53368"/>
<dbReference type="PaxDb" id="10090-ENSMUSP00000059983"/>
<dbReference type="ProteomicsDB" id="296458"/>
<dbReference type="Pumba" id="P53368"/>
<dbReference type="Antibodypedia" id="1866">
    <property type="antibodies" value="246 antibodies from 30 providers"/>
</dbReference>
<dbReference type="DNASU" id="17766"/>
<dbReference type="Ensembl" id="ENSMUST00000050205.12">
    <property type="protein sequence ID" value="ENSMUSP00000059983.6"/>
    <property type="gene ID" value="ENSMUSG00000036639.13"/>
</dbReference>
<dbReference type="Ensembl" id="ENSMUST00000071881.10">
    <property type="protein sequence ID" value="ENSMUSP00000071778.4"/>
    <property type="gene ID" value="ENSMUSG00000036639.13"/>
</dbReference>
<dbReference type="Ensembl" id="ENSMUST00000110826.8">
    <property type="protein sequence ID" value="ENSMUSP00000106450.2"/>
    <property type="gene ID" value="ENSMUSG00000036639.13"/>
</dbReference>
<dbReference type="Ensembl" id="ENSMUST00000110827.8">
    <property type="protein sequence ID" value="ENSMUSP00000106451.2"/>
    <property type="gene ID" value="ENSMUSG00000036639.13"/>
</dbReference>
<dbReference type="GeneID" id="17766"/>
<dbReference type="KEGG" id="mmu:17766"/>
<dbReference type="UCSC" id="uc009ahn.1">
    <property type="organism name" value="mouse"/>
</dbReference>
<dbReference type="AGR" id="MGI:109280"/>
<dbReference type="CTD" id="4521"/>
<dbReference type="MGI" id="MGI:109280">
    <property type="gene designation" value="Nudt1"/>
</dbReference>
<dbReference type="VEuPathDB" id="HostDB:ENSMUSG00000036639"/>
<dbReference type="eggNOG" id="ENOG502S254">
    <property type="taxonomic scope" value="Eukaryota"/>
</dbReference>
<dbReference type="GeneTree" id="ENSGT00390000000341"/>
<dbReference type="InParanoid" id="P53368"/>
<dbReference type="OMA" id="MIEATLC"/>
<dbReference type="OrthoDB" id="408303at2759"/>
<dbReference type="PhylomeDB" id="P53368"/>
<dbReference type="TreeFam" id="TF106348"/>
<dbReference type="BRENDA" id="3.6.1.56">
    <property type="organism ID" value="3474"/>
</dbReference>
<dbReference type="Reactome" id="R-MMU-2393930">
    <property type="pathway name" value="Phosphate bond hydrolysis by NUDT proteins"/>
</dbReference>
<dbReference type="BioGRID-ORCS" id="17766">
    <property type="hits" value="3 hits in 116 CRISPR screens"/>
</dbReference>
<dbReference type="ChiTaRS" id="Nudt1">
    <property type="organism name" value="mouse"/>
</dbReference>
<dbReference type="PRO" id="PR:P53368"/>
<dbReference type="Proteomes" id="UP000000589">
    <property type="component" value="Chromosome 5"/>
</dbReference>
<dbReference type="RNAct" id="P53368">
    <property type="molecule type" value="protein"/>
</dbReference>
<dbReference type="Bgee" id="ENSMUSG00000036639">
    <property type="expression patterns" value="Expressed in otic placode and 211 other cell types or tissues"/>
</dbReference>
<dbReference type="ExpressionAtlas" id="P53368">
    <property type="expression patterns" value="baseline and differential"/>
</dbReference>
<dbReference type="GO" id="GO:0001669">
    <property type="term" value="C:acrosomal vesicle"/>
    <property type="evidence" value="ECO:0007669"/>
    <property type="project" value="UniProtKB-SubCell"/>
</dbReference>
<dbReference type="GO" id="GO:0005737">
    <property type="term" value="C:cytoplasm"/>
    <property type="evidence" value="ECO:0000250"/>
    <property type="project" value="UniProtKB"/>
</dbReference>
<dbReference type="GO" id="GO:0005829">
    <property type="term" value="C:cytosol"/>
    <property type="evidence" value="ECO:0007669"/>
    <property type="project" value="Ensembl"/>
</dbReference>
<dbReference type="GO" id="GO:0005759">
    <property type="term" value="C:mitochondrial matrix"/>
    <property type="evidence" value="ECO:0000250"/>
    <property type="project" value="UniProtKB"/>
</dbReference>
<dbReference type="GO" id="GO:0005739">
    <property type="term" value="C:mitochondrion"/>
    <property type="evidence" value="ECO:0000250"/>
    <property type="project" value="UniProtKB"/>
</dbReference>
<dbReference type="GO" id="GO:0031965">
    <property type="term" value="C:nuclear membrane"/>
    <property type="evidence" value="ECO:0007669"/>
    <property type="project" value="UniProtKB-SubCell"/>
</dbReference>
<dbReference type="GO" id="GO:0005634">
    <property type="term" value="C:nucleus"/>
    <property type="evidence" value="ECO:0000250"/>
    <property type="project" value="UniProtKB"/>
</dbReference>
<dbReference type="GO" id="GO:0106377">
    <property type="term" value="F:2-hydroxy-ATP hydrolase activity"/>
    <property type="evidence" value="ECO:0000250"/>
    <property type="project" value="UniProtKB"/>
</dbReference>
<dbReference type="GO" id="GO:0106378">
    <property type="term" value="F:2-hydroxy-dATP hydrolase activity"/>
    <property type="evidence" value="ECO:0000250"/>
    <property type="project" value="UniProtKB"/>
</dbReference>
<dbReference type="GO" id="GO:0035539">
    <property type="term" value="F:8-oxo-7,8-dihydrodeoxyguanosine triphosphate pyrophosphatase activity"/>
    <property type="evidence" value="ECO:0000250"/>
    <property type="project" value="UniProtKB"/>
</dbReference>
<dbReference type="GO" id="GO:0008413">
    <property type="term" value="F:8-oxo-7,8-dihydroguanosine triphosphate pyrophosphatase activity"/>
    <property type="evidence" value="ECO:0000314"/>
    <property type="project" value="MGI"/>
</dbReference>
<dbReference type="GO" id="GO:0047693">
    <property type="term" value="F:ATP diphosphatase activity"/>
    <property type="evidence" value="ECO:0007669"/>
    <property type="project" value="Ensembl"/>
</dbReference>
<dbReference type="GO" id="GO:0008828">
    <property type="term" value="F:dATP diphosphatase activity"/>
    <property type="evidence" value="ECO:0007669"/>
    <property type="project" value="UniProtKB-EC"/>
</dbReference>
<dbReference type="GO" id="GO:0046872">
    <property type="term" value="F:metal ion binding"/>
    <property type="evidence" value="ECO:0007669"/>
    <property type="project" value="UniProtKB-KW"/>
</dbReference>
<dbReference type="GO" id="GO:0106431">
    <property type="term" value="F:N6-methyl-(d)ATP hydrolase activity"/>
    <property type="evidence" value="ECO:0007669"/>
    <property type="project" value="RHEA"/>
</dbReference>
<dbReference type="GO" id="GO:0106433">
    <property type="term" value="F:O6-methyl-dGTP hydrolase activity"/>
    <property type="evidence" value="ECO:0007669"/>
    <property type="project" value="RHEA"/>
</dbReference>
<dbReference type="GO" id="GO:0030515">
    <property type="term" value="F:snoRNA binding"/>
    <property type="evidence" value="ECO:0000314"/>
    <property type="project" value="UniProtKB"/>
</dbReference>
<dbReference type="GO" id="GO:0042262">
    <property type="term" value="P:DNA protection"/>
    <property type="evidence" value="ECO:0000250"/>
    <property type="project" value="UniProtKB"/>
</dbReference>
<dbReference type="GO" id="GO:0006152">
    <property type="term" value="P:purine nucleoside catabolic process"/>
    <property type="evidence" value="ECO:0000250"/>
    <property type="project" value="UniProtKB"/>
</dbReference>
<dbReference type="CDD" id="cd03427">
    <property type="entry name" value="NUDIX_MTH1_Nudt1"/>
    <property type="match status" value="1"/>
</dbReference>
<dbReference type="FunFam" id="3.90.79.10:FF:000043">
    <property type="entry name" value="7,8-dihydro-8-oxoguanine triphosphatase"/>
    <property type="match status" value="1"/>
</dbReference>
<dbReference type="Gene3D" id="3.90.79.10">
    <property type="entry name" value="Nucleoside Triphosphate Pyrophosphohydrolase"/>
    <property type="match status" value="1"/>
</dbReference>
<dbReference type="InterPro" id="IPR003563">
    <property type="entry name" value="8ODP"/>
</dbReference>
<dbReference type="InterPro" id="IPR020476">
    <property type="entry name" value="Nudix_hydrolase"/>
</dbReference>
<dbReference type="InterPro" id="IPR015797">
    <property type="entry name" value="NUDIX_hydrolase-like_dom_sf"/>
</dbReference>
<dbReference type="InterPro" id="IPR020084">
    <property type="entry name" value="NUDIX_hydrolase_CS"/>
</dbReference>
<dbReference type="InterPro" id="IPR000086">
    <property type="entry name" value="NUDIX_hydrolase_dom"/>
</dbReference>
<dbReference type="PANTHER" id="PTHR43758">
    <property type="entry name" value="7,8-DIHYDRO-8-OXOGUANINE TRIPHOSPHATASE"/>
    <property type="match status" value="1"/>
</dbReference>
<dbReference type="PANTHER" id="PTHR43758:SF2">
    <property type="entry name" value="OXIDIZED PURINE NUCLEOSIDE TRIPHOSPHATE HYDROLASE"/>
    <property type="match status" value="1"/>
</dbReference>
<dbReference type="Pfam" id="PF00293">
    <property type="entry name" value="NUDIX"/>
    <property type="match status" value="1"/>
</dbReference>
<dbReference type="PRINTS" id="PR01403">
    <property type="entry name" value="8OXTPHPHTASE"/>
</dbReference>
<dbReference type="PRINTS" id="PR00502">
    <property type="entry name" value="NUDIXFAMILY"/>
</dbReference>
<dbReference type="SUPFAM" id="SSF55811">
    <property type="entry name" value="Nudix"/>
    <property type="match status" value="1"/>
</dbReference>
<dbReference type="PROSITE" id="PS51462">
    <property type="entry name" value="NUDIX"/>
    <property type="match status" value="1"/>
</dbReference>
<dbReference type="PROSITE" id="PS00893">
    <property type="entry name" value="NUDIX_BOX"/>
    <property type="match status" value="1"/>
</dbReference>
<proteinExistence type="evidence at protein level"/>
<accession>P53368</accession>
<accession>P97795</accession>
<accession>Q542J4</accession>
<accession>Q8VDG0</accession>
<reference key="1">
    <citation type="journal article" date="1995" name="J. Biol. Chem.">
        <title>Mouse MTH1 protein with 8-oxo-7,8-dihydro-2'-deoxyguanosine 5'-triphosphatase activity that prevents transversion mutation. cDNA cloning and tissue distribution.</title>
        <authorList>
            <person name="Kakuma T."/>
            <person name="Nishida J."/>
            <person name="Tsuzuki T."/>
            <person name="Sekiguchi M."/>
        </authorList>
    </citation>
    <scope>NUCLEOTIDE SEQUENCE [MRNA]</scope>
    <scope>FUNCTION</scope>
    <scope>CATALYTIC ACTIVITY</scope>
    <scope>TISSUE SPECIFICITY</scope>
    <source>
        <strain>129/Sv</strain>
        <tissue>Embryonic stem cell</tissue>
    </source>
</reference>
<reference key="2">
    <citation type="journal article" date="1997" name="J. Biol. Chem.">
        <title>Organization and expression of the mouse MTH1 gene for preventing transversion mutation.</title>
        <authorList>
            <person name="Igarashi H."/>
            <person name="Tsuzuki T."/>
            <person name="Kakuma T."/>
            <person name="Tominaga Y."/>
            <person name="Sekiguchi M."/>
        </authorList>
    </citation>
    <scope>NUCLEOTIDE SEQUENCE [GENOMIC DNA]</scope>
    <source>
        <strain>129/Sv</strain>
        <tissue>Embryonic stem cell</tissue>
    </source>
</reference>
<reference key="3">
    <citation type="journal article" date="2005" name="Science">
        <title>The transcriptional landscape of the mammalian genome.</title>
        <authorList>
            <person name="Carninci P."/>
            <person name="Kasukawa T."/>
            <person name="Katayama S."/>
            <person name="Gough J."/>
            <person name="Frith M.C."/>
            <person name="Maeda N."/>
            <person name="Oyama R."/>
            <person name="Ravasi T."/>
            <person name="Lenhard B."/>
            <person name="Wells C."/>
            <person name="Kodzius R."/>
            <person name="Shimokawa K."/>
            <person name="Bajic V.B."/>
            <person name="Brenner S.E."/>
            <person name="Batalov S."/>
            <person name="Forrest A.R."/>
            <person name="Zavolan M."/>
            <person name="Davis M.J."/>
            <person name="Wilming L.G."/>
            <person name="Aidinis V."/>
            <person name="Allen J.E."/>
            <person name="Ambesi-Impiombato A."/>
            <person name="Apweiler R."/>
            <person name="Aturaliya R.N."/>
            <person name="Bailey T.L."/>
            <person name="Bansal M."/>
            <person name="Baxter L."/>
            <person name="Beisel K.W."/>
            <person name="Bersano T."/>
            <person name="Bono H."/>
            <person name="Chalk A.M."/>
            <person name="Chiu K.P."/>
            <person name="Choudhary V."/>
            <person name="Christoffels A."/>
            <person name="Clutterbuck D.R."/>
            <person name="Crowe M.L."/>
            <person name="Dalla E."/>
            <person name="Dalrymple B.P."/>
            <person name="de Bono B."/>
            <person name="Della Gatta G."/>
            <person name="di Bernardo D."/>
            <person name="Down T."/>
            <person name="Engstrom P."/>
            <person name="Fagiolini M."/>
            <person name="Faulkner G."/>
            <person name="Fletcher C.F."/>
            <person name="Fukushima T."/>
            <person name="Furuno M."/>
            <person name="Futaki S."/>
            <person name="Gariboldi M."/>
            <person name="Georgii-Hemming P."/>
            <person name="Gingeras T.R."/>
            <person name="Gojobori T."/>
            <person name="Green R.E."/>
            <person name="Gustincich S."/>
            <person name="Harbers M."/>
            <person name="Hayashi Y."/>
            <person name="Hensch T.K."/>
            <person name="Hirokawa N."/>
            <person name="Hill D."/>
            <person name="Huminiecki L."/>
            <person name="Iacono M."/>
            <person name="Ikeo K."/>
            <person name="Iwama A."/>
            <person name="Ishikawa T."/>
            <person name="Jakt M."/>
            <person name="Kanapin A."/>
            <person name="Katoh M."/>
            <person name="Kawasawa Y."/>
            <person name="Kelso J."/>
            <person name="Kitamura H."/>
            <person name="Kitano H."/>
            <person name="Kollias G."/>
            <person name="Krishnan S.P."/>
            <person name="Kruger A."/>
            <person name="Kummerfeld S.K."/>
            <person name="Kurochkin I.V."/>
            <person name="Lareau L.F."/>
            <person name="Lazarevic D."/>
            <person name="Lipovich L."/>
            <person name="Liu J."/>
            <person name="Liuni S."/>
            <person name="McWilliam S."/>
            <person name="Madan Babu M."/>
            <person name="Madera M."/>
            <person name="Marchionni L."/>
            <person name="Matsuda H."/>
            <person name="Matsuzawa S."/>
            <person name="Miki H."/>
            <person name="Mignone F."/>
            <person name="Miyake S."/>
            <person name="Morris K."/>
            <person name="Mottagui-Tabar S."/>
            <person name="Mulder N."/>
            <person name="Nakano N."/>
            <person name="Nakauchi H."/>
            <person name="Ng P."/>
            <person name="Nilsson R."/>
            <person name="Nishiguchi S."/>
            <person name="Nishikawa S."/>
            <person name="Nori F."/>
            <person name="Ohara O."/>
            <person name="Okazaki Y."/>
            <person name="Orlando V."/>
            <person name="Pang K.C."/>
            <person name="Pavan W.J."/>
            <person name="Pavesi G."/>
            <person name="Pesole G."/>
            <person name="Petrovsky N."/>
            <person name="Piazza S."/>
            <person name="Reed J."/>
            <person name="Reid J.F."/>
            <person name="Ring B.Z."/>
            <person name="Ringwald M."/>
            <person name="Rost B."/>
            <person name="Ruan Y."/>
            <person name="Salzberg S.L."/>
            <person name="Sandelin A."/>
            <person name="Schneider C."/>
            <person name="Schoenbach C."/>
            <person name="Sekiguchi K."/>
            <person name="Semple C.A."/>
            <person name="Seno S."/>
            <person name="Sessa L."/>
            <person name="Sheng Y."/>
            <person name="Shibata Y."/>
            <person name="Shimada H."/>
            <person name="Shimada K."/>
            <person name="Silva D."/>
            <person name="Sinclair B."/>
            <person name="Sperling S."/>
            <person name="Stupka E."/>
            <person name="Sugiura K."/>
            <person name="Sultana R."/>
            <person name="Takenaka Y."/>
            <person name="Taki K."/>
            <person name="Tammoja K."/>
            <person name="Tan S.L."/>
            <person name="Tang S."/>
            <person name="Taylor M.S."/>
            <person name="Tegner J."/>
            <person name="Teichmann S.A."/>
            <person name="Ueda H.R."/>
            <person name="van Nimwegen E."/>
            <person name="Verardo R."/>
            <person name="Wei C.L."/>
            <person name="Yagi K."/>
            <person name="Yamanishi H."/>
            <person name="Zabarovsky E."/>
            <person name="Zhu S."/>
            <person name="Zimmer A."/>
            <person name="Hide W."/>
            <person name="Bult C."/>
            <person name="Grimmond S.M."/>
            <person name="Teasdale R.D."/>
            <person name="Liu E.T."/>
            <person name="Brusic V."/>
            <person name="Quackenbush J."/>
            <person name="Wahlestedt C."/>
            <person name="Mattick J.S."/>
            <person name="Hume D.A."/>
            <person name="Kai C."/>
            <person name="Sasaki D."/>
            <person name="Tomaru Y."/>
            <person name="Fukuda S."/>
            <person name="Kanamori-Katayama M."/>
            <person name="Suzuki M."/>
            <person name="Aoki J."/>
            <person name="Arakawa T."/>
            <person name="Iida J."/>
            <person name="Imamura K."/>
            <person name="Itoh M."/>
            <person name="Kato T."/>
            <person name="Kawaji H."/>
            <person name="Kawagashira N."/>
            <person name="Kawashima T."/>
            <person name="Kojima M."/>
            <person name="Kondo S."/>
            <person name="Konno H."/>
            <person name="Nakano K."/>
            <person name="Ninomiya N."/>
            <person name="Nishio T."/>
            <person name="Okada M."/>
            <person name="Plessy C."/>
            <person name="Shibata K."/>
            <person name="Shiraki T."/>
            <person name="Suzuki S."/>
            <person name="Tagami M."/>
            <person name="Waki K."/>
            <person name="Watahiki A."/>
            <person name="Okamura-Oho Y."/>
            <person name="Suzuki H."/>
            <person name="Kawai J."/>
            <person name="Hayashizaki Y."/>
        </authorList>
    </citation>
    <scope>NUCLEOTIDE SEQUENCE [LARGE SCALE MRNA]</scope>
    <source>
        <strain>C57BL/6J</strain>
        <strain>DBA/2J</strain>
        <strain>NOD</strain>
        <tissue>Embryo</tissue>
        <tissue>Thymus</tissue>
    </source>
</reference>
<reference key="4">
    <citation type="submission" date="2005-09" db="EMBL/GenBank/DDBJ databases">
        <authorList>
            <person name="Mural R.J."/>
            <person name="Adams M.D."/>
            <person name="Myers E.W."/>
            <person name="Smith H.O."/>
            <person name="Venter J.C."/>
        </authorList>
    </citation>
    <scope>NUCLEOTIDE SEQUENCE [LARGE SCALE GENOMIC DNA]</scope>
</reference>
<reference key="5">
    <citation type="journal article" date="2004" name="Genome Res.">
        <title>The status, quality, and expansion of the NIH full-length cDNA project: the Mammalian Gene Collection (MGC).</title>
        <authorList>
            <consortium name="The MGC Project Team"/>
        </authorList>
    </citation>
    <scope>NUCLEOTIDE SEQUENCE [LARGE SCALE MRNA]</scope>
    <source>
        <strain>Czech II</strain>
        <tissue>Mammary gland</tissue>
        <tissue>Mammary tumor</tissue>
    </source>
</reference>
<reference key="6">
    <citation type="journal article" date="2001" name="Proc. Natl. Acad. Sci. U.S.A.">
        <title>Spontaneous tumorigenesis in mice defective in the MTH1 gene encoding 8-oxo-dGTPase.</title>
        <authorList>
            <person name="Tsuzuki T."/>
            <person name="Egashira A."/>
            <person name="Igarashi H."/>
            <person name="Iwakuma T."/>
            <person name="Nakatsuru Y."/>
            <person name="Tominaga Y."/>
            <person name="Kawate H."/>
            <person name="Nakao K."/>
            <person name="Nakamura K."/>
            <person name="Ide F."/>
            <person name="Kura S."/>
            <person name="Nakabeppu Y."/>
            <person name="Katsuki M."/>
            <person name="Ishikawa T."/>
            <person name="Sekiguchi M."/>
        </authorList>
    </citation>
    <scope>FUNCTION</scope>
    <scope>CATALYTIC ACTIVITY</scope>
    <scope>DISRUPTION PHENOTYPE</scope>
</reference>
<reference key="7">
    <citation type="journal article" date="2010" name="Cell">
        <title>A tissue-specific atlas of mouse protein phosphorylation and expression.</title>
        <authorList>
            <person name="Huttlin E.L."/>
            <person name="Jedrychowski M.P."/>
            <person name="Elias J.E."/>
            <person name="Goswami T."/>
            <person name="Rad R."/>
            <person name="Beausoleil S.A."/>
            <person name="Villen J."/>
            <person name="Haas W."/>
            <person name="Sowa M.E."/>
            <person name="Gygi S.P."/>
        </authorList>
    </citation>
    <scope>IDENTIFICATION BY MASS SPECTROMETRY [LARGE SCALE ANALYSIS]</scope>
    <source>
        <tissue>Liver</tissue>
    </source>
</reference>
<reference key="8">
    <citation type="journal article" date="2018" name="Nucleic Acids Res.">
        <title>MutT homologue 1 (MTH1) catalyzes the hydrolysis of mutagenic O6-methyl-dGTP.</title>
        <authorList>
            <person name="Jemth A.S."/>
            <person name="Gustafsson R."/>
            <person name="Braeutigam L."/>
            <person name="Henriksson L."/>
            <person name="Vallin K.S.A."/>
            <person name="Sarno A."/>
            <person name="Almloef I."/>
            <person name="Homan E."/>
            <person name="Rasti A."/>
            <person name="Warpman Berglund U."/>
            <person name="Stenmark P."/>
            <person name="Helleday T."/>
        </authorList>
    </citation>
    <scope>FUNCTION</scope>
    <scope>CATALYTIC ACTIVITY</scope>
</reference>
<reference key="9">
    <citation type="journal article" date="2020" name="J. Biol. Chem.">
        <title>MutT homologue 1 (MTH1) removes N6-methyl-dATP from the dNTP pool.</title>
        <authorList>
            <person name="Scaletti E.R."/>
            <person name="Vallin K.S."/>
            <person name="Braeutigam L."/>
            <person name="Sarno A."/>
            <person name="Warpman Berglund U."/>
            <person name="Helleday T."/>
            <person name="Stenmark P."/>
            <person name="Jemth A.S."/>
        </authorList>
    </citation>
    <scope>FUNCTION</scope>
    <scope>CATALYTIC ACTIVITY</scope>
</reference>
<reference evidence="14 15 16" key="10">
    <citation type="journal article" date="2018" name="Biochemistry">
        <title>Crystal Structures and Inhibitor Interactions of Mouse and Dog MTH1 Reveal Species-Specific Differences in Affinity.</title>
        <authorList>
            <person name="Narwal M."/>
            <person name="Jemth A.S."/>
            <person name="Gustafsson R."/>
            <person name="Almlof I."/>
            <person name="Warpman Berglund U."/>
            <person name="Helleday T."/>
            <person name="Stenmark P."/>
        </authorList>
    </citation>
    <scope>X-RAY CRYSTALLOGRAPHY (1.85 ANGSTROMS) IN COMPLEXES WITH 8-OXO-DGTP AND SYNTHETIC INHIBITORS</scope>
    <scope>CATALYTIC ACTIVITY</scope>
    <scope>SUBUNIT</scope>
</reference>
<keyword id="KW-0002">3D-structure</keyword>
<keyword id="KW-0963">Cytoplasm</keyword>
<keyword id="KW-0968">Cytoplasmic vesicle</keyword>
<keyword id="KW-0378">Hydrolase</keyword>
<keyword id="KW-0460">Magnesium</keyword>
<keyword id="KW-0472">Membrane</keyword>
<keyword id="KW-0479">Metal-binding</keyword>
<keyword id="KW-0539">Nucleus</keyword>
<keyword id="KW-1185">Reference proteome</keyword>
<keyword id="KW-0694">RNA-binding</keyword>
<comment type="function">
    <text evidence="1 5 6 7 8 9">Oxidized purine nucleoside triphosphate hydrolase which is a prominent sanitizer of the oxidized nucleotide pool (PubMed:11572992, PubMed:29281266, PubMed:30304478, PubMed:7592783). Catalyzes the hydrolysis of 2-oxo-dATP (2-hydroxy-dATP) into 2-oxo-dAMP (By similarity). Also has a significant hydrolase activity toward 2-oxo-ATP, 8-oxo-dGTP and 8-oxo-dATP (PubMed:11572992, PubMed:29281266, PubMed:30304478, PubMed:7592783). Through the hydrolysis of oxidized purine nucleoside triphosphates, prevents their incorporation into DNA and the subsequent transversions A:T to C:G and G:C to T:A (PubMed:11572992, PubMed:29281266, PubMed:30304478, PubMed:7592783). Also catalyzes the hydrolysis of methylated purine nucleoside triphosphate preventing their integration into DNA (PubMed:30304478, PubMed:32144205). Through this antimutagenic activity protects cells from oxidative stress (PubMed:11572992, PubMed:29281266, PubMed:30304478, PubMed:32144205, PubMed:7592783).</text>
</comment>
<comment type="catalytic activity">
    <reaction evidence="1">
        <text>2-oxo-dATP + H2O = 2-oxo-dAMP + diphosphate + H(+)</text>
        <dbReference type="Rhea" id="RHEA:31583"/>
        <dbReference type="ChEBI" id="CHEBI:15377"/>
        <dbReference type="ChEBI" id="CHEBI:15378"/>
        <dbReference type="ChEBI" id="CHEBI:33019"/>
        <dbReference type="ChEBI" id="CHEBI:63212"/>
        <dbReference type="ChEBI" id="CHEBI:77897"/>
        <dbReference type="EC" id="3.6.1.56"/>
    </reaction>
    <physiologicalReaction direction="left-to-right" evidence="1">
        <dbReference type="Rhea" id="RHEA:31584"/>
    </physiologicalReaction>
</comment>
<comment type="catalytic activity">
    <reaction evidence="1">
        <text>2-oxo-ATP + H2O = 2-oxo-AMP + diphosphate + H(+)</text>
        <dbReference type="Rhea" id="RHEA:67392"/>
        <dbReference type="ChEBI" id="CHEBI:15377"/>
        <dbReference type="ChEBI" id="CHEBI:15378"/>
        <dbReference type="ChEBI" id="CHEBI:33019"/>
        <dbReference type="ChEBI" id="CHEBI:71395"/>
        <dbReference type="ChEBI" id="CHEBI:172878"/>
    </reaction>
    <physiologicalReaction direction="left-to-right" evidence="1">
        <dbReference type="Rhea" id="RHEA:67393"/>
    </physiologicalReaction>
</comment>
<comment type="catalytic activity">
    <reaction evidence="5 6 7 9">
        <text>8-oxo-dGTP + H2O = 8-oxo-dGMP + diphosphate + H(+)</text>
        <dbReference type="Rhea" id="RHEA:31575"/>
        <dbReference type="ChEBI" id="CHEBI:15377"/>
        <dbReference type="ChEBI" id="CHEBI:15378"/>
        <dbReference type="ChEBI" id="CHEBI:33019"/>
        <dbReference type="ChEBI" id="CHEBI:63224"/>
        <dbReference type="ChEBI" id="CHEBI:77896"/>
    </reaction>
    <physiologicalReaction direction="left-to-right" evidence="5">
        <dbReference type="Rhea" id="RHEA:31576"/>
    </physiologicalReaction>
</comment>
<comment type="catalytic activity">
    <reaction evidence="1">
        <text>8-oxo-dATP + H2O = 8-oxo-dAMP + diphosphate + H(+)</text>
        <dbReference type="Rhea" id="RHEA:65396"/>
        <dbReference type="ChEBI" id="CHEBI:15377"/>
        <dbReference type="ChEBI" id="CHEBI:15378"/>
        <dbReference type="ChEBI" id="CHEBI:33019"/>
        <dbReference type="ChEBI" id="CHEBI:71361"/>
        <dbReference type="ChEBI" id="CHEBI:172871"/>
    </reaction>
    <physiologicalReaction direction="left-to-right" evidence="1">
        <dbReference type="Rhea" id="RHEA:65397"/>
    </physiologicalReaction>
</comment>
<comment type="catalytic activity">
    <reaction evidence="7">
        <text>O(6)-methyl-dGTP + H2O = O(6)-methyl-dGMP + diphosphate + H(+)</text>
        <dbReference type="Rhea" id="RHEA:67600"/>
        <dbReference type="ChEBI" id="CHEBI:15377"/>
        <dbReference type="ChEBI" id="CHEBI:15378"/>
        <dbReference type="ChEBI" id="CHEBI:33019"/>
        <dbReference type="ChEBI" id="CHEBI:169974"/>
        <dbReference type="ChEBI" id="CHEBI:169975"/>
    </reaction>
    <physiologicalReaction direction="left-to-right" evidence="12">
        <dbReference type="Rhea" id="RHEA:67601"/>
    </physiologicalReaction>
</comment>
<comment type="catalytic activity">
    <reaction evidence="8">
        <text>N(6)-methyl-dATP + H2O = N(6)-methyl-dAMP + diphosphate + H(+)</text>
        <dbReference type="Rhea" id="RHEA:67604"/>
        <dbReference type="ChEBI" id="CHEBI:15377"/>
        <dbReference type="ChEBI" id="CHEBI:15378"/>
        <dbReference type="ChEBI" id="CHEBI:33019"/>
        <dbReference type="ChEBI" id="CHEBI:169976"/>
        <dbReference type="ChEBI" id="CHEBI:172872"/>
    </reaction>
    <physiologicalReaction direction="left-to-right" evidence="13">
        <dbReference type="Rhea" id="RHEA:67605"/>
    </physiologicalReaction>
</comment>
<comment type="catalytic activity">
    <reaction evidence="1">
        <text>N(6)-methyl-ATP + H2O = N(6)-methyl-AMP + diphosphate + H(+)</text>
        <dbReference type="Rhea" id="RHEA:67608"/>
        <dbReference type="ChEBI" id="CHEBI:15377"/>
        <dbReference type="ChEBI" id="CHEBI:15378"/>
        <dbReference type="ChEBI" id="CHEBI:33019"/>
        <dbReference type="ChEBI" id="CHEBI:144842"/>
        <dbReference type="ChEBI" id="CHEBI:172873"/>
    </reaction>
    <physiologicalReaction direction="left-to-right" evidence="1">
        <dbReference type="Rhea" id="RHEA:67609"/>
    </physiologicalReaction>
</comment>
<comment type="cofactor">
    <cofactor evidence="3">
        <name>Mg(2+)</name>
        <dbReference type="ChEBI" id="CHEBI:18420"/>
    </cofactor>
    <text evidence="3">Binds 2 Mg(2+) ion per subunit.</text>
</comment>
<comment type="subunit">
    <text evidence="11">Monomer.</text>
</comment>
<comment type="subcellular location">
    <subcellularLocation>
        <location evidence="2">Cytoplasm</location>
    </subcellularLocation>
    <subcellularLocation>
        <location evidence="2">Nucleus</location>
    </subcellularLocation>
    <subcellularLocation>
        <location evidence="2">Nucleus membrane</location>
    </subcellularLocation>
    <subcellularLocation>
        <location evidence="2">Cytoplasmic vesicle</location>
        <location evidence="2">Secretory vesicle</location>
        <location evidence="2">Acrosome</location>
    </subcellularLocation>
</comment>
<comment type="tissue specificity">
    <text evidence="9">High expression levels detected in thymus, liver, spleen, kidney, testis and large intestine, with lower levels detected in brain, heart, lung and stomach (at protein level). Expressed in kidney, liver and small intestine.</text>
</comment>
<comment type="disruption phenotype">
    <text evidence="5">Mutant mice appear normal, but have higher incidence of tumors in lung, liver and stomach.</text>
</comment>
<comment type="similarity">
    <text evidence="10">Belongs to the Nudix hydrolase family.</text>
</comment>
<gene>
    <name type="primary">Nudt1</name>
    <name type="synonym">Mth1</name>
</gene>